<dbReference type="EC" id="2.7.11.1"/>
<dbReference type="EMBL" id="AP003685">
    <property type="protein sequence ID" value="BAD61693.1"/>
    <property type="molecule type" value="Genomic_DNA"/>
</dbReference>
<dbReference type="EMBL" id="AP007231">
    <property type="protein sequence ID" value="BAD62537.1"/>
    <property type="molecule type" value="Genomic_DNA"/>
</dbReference>
<dbReference type="EMBL" id="AP014962">
    <property type="status" value="NOT_ANNOTATED_CDS"/>
    <property type="molecule type" value="Genomic_DNA"/>
</dbReference>
<dbReference type="EMBL" id="AK109634">
    <property type="status" value="NOT_ANNOTATED_CDS"/>
    <property type="molecule type" value="mRNA"/>
</dbReference>
<dbReference type="RefSeq" id="XP_015643715.1">
    <property type="nucleotide sequence ID" value="XM_015788229.1"/>
</dbReference>
<dbReference type="SMR" id="Q5Z987"/>
<dbReference type="FunCoup" id="Q5Z987">
    <property type="interactions" value="1885"/>
</dbReference>
<dbReference type="STRING" id="39947.Q5Z987"/>
<dbReference type="PaxDb" id="39947-Q5Z987"/>
<dbReference type="eggNOG" id="KOG0890">
    <property type="taxonomic scope" value="Eukaryota"/>
</dbReference>
<dbReference type="InParanoid" id="Q5Z987"/>
<dbReference type="OrthoDB" id="381190at2759"/>
<dbReference type="Proteomes" id="UP000000763">
    <property type="component" value="Chromosome 6"/>
</dbReference>
<dbReference type="Proteomes" id="UP000059680">
    <property type="component" value="Chromosome 6"/>
</dbReference>
<dbReference type="GO" id="GO:0005694">
    <property type="term" value="C:chromosome"/>
    <property type="evidence" value="ECO:0000318"/>
    <property type="project" value="GO_Central"/>
</dbReference>
<dbReference type="GO" id="GO:0005634">
    <property type="term" value="C:nucleus"/>
    <property type="evidence" value="ECO:0000318"/>
    <property type="project" value="GO_Central"/>
</dbReference>
<dbReference type="GO" id="GO:0005524">
    <property type="term" value="F:ATP binding"/>
    <property type="evidence" value="ECO:0007669"/>
    <property type="project" value="UniProtKB-KW"/>
</dbReference>
<dbReference type="GO" id="GO:0106310">
    <property type="term" value="F:protein serine kinase activity"/>
    <property type="evidence" value="ECO:0007669"/>
    <property type="project" value="RHEA"/>
</dbReference>
<dbReference type="GO" id="GO:0004674">
    <property type="term" value="F:protein serine/threonine kinase activity"/>
    <property type="evidence" value="ECO:0000318"/>
    <property type="project" value="GO_Central"/>
</dbReference>
<dbReference type="GO" id="GO:0000077">
    <property type="term" value="P:DNA damage checkpoint signaling"/>
    <property type="evidence" value="ECO:0000318"/>
    <property type="project" value="GO_Central"/>
</dbReference>
<dbReference type="GO" id="GO:0006281">
    <property type="term" value="P:DNA repair"/>
    <property type="evidence" value="ECO:0000318"/>
    <property type="project" value="GO_Central"/>
</dbReference>
<dbReference type="GO" id="GO:0000723">
    <property type="term" value="P:telomere maintenance"/>
    <property type="evidence" value="ECO:0000318"/>
    <property type="project" value="GO_Central"/>
</dbReference>
<dbReference type="CDD" id="cd00892">
    <property type="entry name" value="PIKKc_ATR"/>
    <property type="match status" value="1"/>
</dbReference>
<dbReference type="FunFam" id="1.10.1070.11:FF:000024">
    <property type="entry name" value="Serine/threonine-protein kinase ATR"/>
    <property type="match status" value="1"/>
</dbReference>
<dbReference type="FunFam" id="3.30.1010.10:FF:000020">
    <property type="entry name" value="Serine/threonine-protein kinase ATR"/>
    <property type="match status" value="1"/>
</dbReference>
<dbReference type="Gene3D" id="1.25.10.10">
    <property type="entry name" value="Leucine-rich Repeat Variant"/>
    <property type="match status" value="1"/>
</dbReference>
<dbReference type="Gene3D" id="1.10.1070.11">
    <property type="entry name" value="Phosphatidylinositol 3-/4-kinase, catalytic domain"/>
    <property type="match status" value="1"/>
</dbReference>
<dbReference type="Gene3D" id="3.30.1010.10">
    <property type="entry name" value="Phosphatidylinositol 3-kinase Catalytic Subunit, Chain A, domain 4"/>
    <property type="match status" value="1"/>
</dbReference>
<dbReference type="Gene3D" id="1.25.40.10">
    <property type="entry name" value="Tetratricopeptide repeat domain"/>
    <property type="match status" value="1"/>
</dbReference>
<dbReference type="InterPro" id="IPR011989">
    <property type="entry name" value="ARM-like"/>
</dbReference>
<dbReference type="InterPro" id="IPR016024">
    <property type="entry name" value="ARM-type_fold"/>
</dbReference>
<dbReference type="InterPro" id="IPR056802">
    <property type="entry name" value="ATR-like_M-HEAT"/>
</dbReference>
<dbReference type="InterPro" id="IPR050517">
    <property type="entry name" value="DDR_Repair_Kinase"/>
</dbReference>
<dbReference type="InterPro" id="IPR003152">
    <property type="entry name" value="FATC_dom"/>
</dbReference>
<dbReference type="InterPro" id="IPR011009">
    <property type="entry name" value="Kinase-like_dom_sf"/>
</dbReference>
<dbReference type="InterPro" id="IPR000403">
    <property type="entry name" value="PI3/4_kinase_cat_dom"/>
</dbReference>
<dbReference type="InterPro" id="IPR036940">
    <property type="entry name" value="PI3/4_kinase_cat_sf"/>
</dbReference>
<dbReference type="InterPro" id="IPR018936">
    <property type="entry name" value="PI3/4_kinase_CS"/>
</dbReference>
<dbReference type="InterPro" id="IPR003151">
    <property type="entry name" value="PIK-rel_kinase_FAT"/>
</dbReference>
<dbReference type="InterPro" id="IPR014009">
    <property type="entry name" value="PIK_FAT"/>
</dbReference>
<dbReference type="InterPro" id="IPR011990">
    <property type="entry name" value="TPR-like_helical_dom_sf"/>
</dbReference>
<dbReference type="InterPro" id="IPR012993">
    <property type="entry name" value="UME"/>
</dbReference>
<dbReference type="PANTHER" id="PTHR11139">
    <property type="entry name" value="ATAXIA TELANGIECTASIA MUTATED ATM -RELATED"/>
    <property type="match status" value="1"/>
</dbReference>
<dbReference type="PANTHER" id="PTHR11139:SF69">
    <property type="entry name" value="SERINE_THREONINE-PROTEIN KINASE ATR"/>
    <property type="match status" value="1"/>
</dbReference>
<dbReference type="Pfam" id="PF02259">
    <property type="entry name" value="FAT"/>
    <property type="match status" value="1"/>
</dbReference>
<dbReference type="Pfam" id="PF02260">
    <property type="entry name" value="FATC"/>
    <property type="match status" value="1"/>
</dbReference>
<dbReference type="Pfam" id="PF23593">
    <property type="entry name" value="HEAT_ATR"/>
    <property type="match status" value="1"/>
</dbReference>
<dbReference type="Pfam" id="PF25030">
    <property type="entry name" value="M-HEAT_ATR"/>
    <property type="match status" value="1"/>
</dbReference>
<dbReference type="Pfam" id="PF00454">
    <property type="entry name" value="PI3_PI4_kinase"/>
    <property type="match status" value="1"/>
</dbReference>
<dbReference type="Pfam" id="PF08064">
    <property type="entry name" value="UME"/>
    <property type="match status" value="1"/>
</dbReference>
<dbReference type="SMART" id="SM01343">
    <property type="entry name" value="FATC"/>
    <property type="match status" value="1"/>
</dbReference>
<dbReference type="SMART" id="SM00146">
    <property type="entry name" value="PI3Kc"/>
    <property type="match status" value="1"/>
</dbReference>
<dbReference type="SMART" id="SM00802">
    <property type="entry name" value="UME"/>
    <property type="match status" value="1"/>
</dbReference>
<dbReference type="SUPFAM" id="SSF48371">
    <property type="entry name" value="ARM repeat"/>
    <property type="match status" value="1"/>
</dbReference>
<dbReference type="SUPFAM" id="SSF56112">
    <property type="entry name" value="Protein kinase-like (PK-like)"/>
    <property type="match status" value="1"/>
</dbReference>
<dbReference type="PROSITE" id="PS51189">
    <property type="entry name" value="FAT"/>
    <property type="match status" value="1"/>
</dbReference>
<dbReference type="PROSITE" id="PS51190">
    <property type="entry name" value="FATC"/>
    <property type="match status" value="1"/>
</dbReference>
<dbReference type="PROSITE" id="PS00916">
    <property type="entry name" value="PI3_4_KINASE_2"/>
    <property type="match status" value="1"/>
</dbReference>
<dbReference type="PROSITE" id="PS50290">
    <property type="entry name" value="PI3_4_KINASE_3"/>
    <property type="match status" value="1"/>
</dbReference>
<gene>
    <name type="ordered locus">Os06g0724700</name>
    <name type="ordered locus">LOC_Os06g50910</name>
    <name type="ORF">P0535F09.39</name>
    <name type="ORF">P0548E04.6</name>
</gene>
<name>ATR_ORYSJ</name>
<organism>
    <name type="scientific">Oryza sativa subsp. japonica</name>
    <name type="common">Rice</name>
    <dbReference type="NCBI Taxonomy" id="39947"/>
    <lineage>
        <taxon>Eukaryota</taxon>
        <taxon>Viridiplantae</taxon>
        <taxon>Streptophyta</taxon>
        <taxon>Embryophyta</taxon>
        <taxon>Tracheophyta</taxon>
        <taxon>Spermatophyta</taxon>
        <taxon>Magnoliopsida</taxon>
        <taxon>Liliopsida</taxon>
        <taxon>Poales</taxon>
        <taxon>Poaceae</taxon>
        <taxon>BOP clade</taxon>
        <taxon>Oryzoideae</taxon>
        <taxon>Oryzeae</taxon>
        <taxon>Oryzinae</taxon>
        <taxon>Oryza</taxon>
        <taxon>Oryza sativa</taxon>
    </lineage>
</organism>
<comment type="function">
    <text evidence="1">Probable serine/threonine kinase. Seems to play a central role in cell-cycle regulation by transmitting DNA damage signals to downstream effectors of cell-cycle progression. May recognize the substrate consensus sequence [ST]-Q and phosphorylate histone variant H2AX to form H2AXS139ph at sites of DNA damage, thereby regulating DNA damage response mechanism (By similarity).</text>
</comment>
<comment type="catalytic activity">
    <reaction>
        <text>L-seryl-[protein] + ATP = O-phospho-L-seryl-[protein] + ADP + H(+)</text>
        <dbReference type="Rhea" id="RHEA:17989"/>
        <dbReference type="Rhea" id="RHEA-COMP:9863"/>
        <dbReference type="Rhea" id="RHEA-COMP:11604"/>
        <dbReference type="ChEBI" id="CHEBI:15378"/>
        <dbReference type="ChEBI" id="CHEBI:29999"/>
        <dbReference type="ChEBI" id="CHEBI:30616"/>
        <dbReference type="ChEBI" id="CHEBI:83421"/>
        <dbReference type="ChEBI" id="CHEBI:456216"/>
        <dbReference type="EC" id="2.7.11.1"/>
    </reaction>
</comment>
<comment type="catalytic activity">
    <reaction>
        <text>L-threonyl-[protein] + ATP = O-phospho-L-threonyl-[protein] + ADP + H(+)</text>
        <dbReference type="Rhea" id="RHEA:46608"/>
        <dbReference type="Rhea" id="RHEA-COMP:11060"/>
        <dbReference type="Rhea" id="RHEA-COMP:11605"/>
        <dbReference type="ChEBI" id="CHEBI:15378"/>
        <dbReference type="ChEBI" id="CHEBI:30013"/>
        <dbReference type="ChEBI" id="CHEBI:30616"/>
        <dbReference type="ChEBI" id="CHEBI:61977"/>
        <dbReference type="ChEBI" id="CHEBI:456216"/>
        <dbReference type="EC" id="2.7.11.1"/>
    </reaction>
</comment>
<comment type="subcellular location">
    <subcellularLocation>
        <location evidence="5">Nucleus</location>
    </subcellularLocation>
</comment>
<comment type="similarity">
    <text evidence="5">Belongs to the PI3/PI4-kinase family. ATM subfamily.</text>
</comment>
<sequence>MANFSSHIQELRELIAASSTTTSTSAPASVHFEVKLREVLPNLLRDYVVPSSPTADGREATAVLKLLSYTAGKFPGVFFHGRAADVIRVIGRVLPFFAEPNFRSRHEIIFDTVWSLLSLLRTGDREAYRQFFLDVMVAVQDVLYVVASMHGDRPSGVLTERYLVKCLCGSFSDILDSPGIFSDLPDSCQPKNGPGVLVDLTGETRWRPFATMLIKLVNKCLADGTLYVEGLVNMPFVSAACSIICYGDESLHKVCFDFARIVATVITVEILPVENIIRSIMCILSQDVNGLSDIRDADYDFSMGACLHALHSSCPGYIVAITASDIVNVFQRAVHTSRSSELQVAMCNAYKRIVELCSPRVWKPEILLKLLCLPKPCAKLIECIRLVVDKSGQSFLSSDDRDDGSSLLAKSEGLDLPKVGQKRIALDEENSFPKRLKMTEPRFSSGSFMVDELSAGVGQELEKDHGCDFRVQLYSLINCLSPDNHMAYPLEPAISIQVLSLLCLSLSVYPKTNLFSRISKQVLSWIPWICKQTTKICMFSFDVSLYFEAVQTVMLLQSFLPGHTKLFEDEPLLIGNGCTDFEYPRYADLINLLKLVSDDGYLTSQTCSEKLKCLAVQIIAKIGSRQNAECDLQVLELAIQSETGELQNEALMSLPIIVLYSGPRMLGAMFRKLETIGTLGCKKLWKSIAISLGFLSCLNGTTDCTDKVGNHCKLFLAKHCEQPILTLNLLRGFWCPQCDVRTVHIEDQVPIVDIALSEDKNIDFKINMFKAHSLFFKFLYAETSEECIVSIVEVLPRILKHSSRDVLLDMKFQWVQCVDFLLLHEMKAVRDAFSSVVSCFLETNAMDILFSDGTGMSGGTSRVKFMDKIKSAFTEAEDPQILLTLLESTAAIVKASDIHGEVFFCSFVLLIGQLGNHDYIVRVTALRLLQRCCTYCFKGGLELFLSKYFHVRDNLYDYLSSRLLTHPVVISEFAESVLGVKTEELIRRMVPSIIPKLIVSHQNNDQAVVTLNELASHLNSELVPLIVNSLPKVLSFALFYEDGQHLSSVLQFYHTETGTDSKEIFSAALPTLLDEIICFPGESDQIETDRRMAKISPTIQNIARILTGNDNLPEFLKNDFVRLLNSIDKKMLHSSDVNLQKQALQRIRKLVEMMGPYLSTHAPKIMVLLIFAIDKETLQMDGLDVLHFFIKRLAEVSCTSIKYVMSQVVAAFIPSLERCRERPLVHLGKIVEILEELVVKNIILLKQHIRELPLLPSLPSLSGVNKVIQEARGLMTLQDHLKDAVNGLNHESLNVRYMVACELNKLFNDRRGDITSLIIGEDIADLDIISSLIMSLLKGCAEESRTVVGQRLKLVCADCLGALGAVDPAKFKVMSCERFKIECSDDDLIFELIHKHLARAFRAASDTTVQDSAALAIQELLKLSGCQSLPNESSSCKMSKRGQKLWGRFSSYVKEIIAPCLTSRFHLPSVNDATLAGPIYRPTMSFRRWIYYWIRKLTSHATGSRSGIFGACRGIVRHDMPTAIYLLPYLVLNVVCYGTPEARQSITEEILSVLNAAASESSGAIVHGITGGQSEVCIQAVFTLLDNLGQWVDDLKQEIALSQSNYAMAGRQGGKLRDESNSMYDQDQLLVQCSNVAELLAAIPKVTLAKASFRCQAHARALMYFESHVREKSGSSNPAADCSGAFSDDDISFLMEIYGGLDEPDGLLGLANLRKSSTLQDQLIINEKAGNWAEVLTLCEQSLQMEPDSVHRHCDVLNCLLNMCHLQAMIAHVDGLVYRIPQSKKTWCMQGVQAAWRLGRWDLMDEYLAEADKGLVCRSSENNASFDMGLAKIFNAMMKKDQFMVAEKIAQSKQALLVPLAAAGMDSYMRAYPYIVKLHMLRELEDFNSLLGDESFLEKPFAADDPKFLKLTKDWENRLRCTQPSLWAREPLLAFRRMVYNLSHMNAQAGNCWLQYARLCRLAGHYETAHRAILEADASGAPNAHMEKAKYLWNIRKSDSAIAELQQTLLNMPADVLGPTVLSSLSSLSLALPNAPLSVTQASKENPDVSKTLLLYTRWIHYTGQKQSNDIKSLYSRVADLRPKWEKGFFCIAKFYDDLLVDARRRQEDKKIASGVGPVPPSSTGSLTTATEEKPWWDMLPVVLIQYARGLHRGHKNLFQALPRLLTLWFEFGSIYIQDGSSFNKPMKEVHIRLLGIMRGCLKDLPPYQWLTVLSQLISRICHQNIEVVKLVKCIVTSILREYPQQALWMMAAVSKSTVAARRDAAAEILQSAKKGSRRGSDSNALFMQFPSLIDHLIKLCFHPGQPKARAINISTEFSSLKRMMPLGIILPIQQALTVTLPSYDTNMTDQSTFRPFSVSEHPTIAGIADDAEILNSLQKPKKVVFIGSDGISRPFLCKPKDDLRKDSRMMEFNAMINRLLSKVPESRRRKLYIRTFAVVPLTEDCGMVEWVPNTRGLRQILQDIYITCGKFDRMKTNPQIKKIYDQLQGKMPEEMLKAKILPMFPPVFHKWFLTTFSEPAAWIRARAAYAHTTAVWSMVGHIVGLGDRHGENILLDSTTGDCIHVDFSCLFDKGLLLEKPEVVPFRFTQNMVDGLGITGYEGVFVKVCEITLSVLRTHKEALMTVLETFIHDPLVEWTKSHKSSGVEVRNPHAQRAISNITERLQGVVVGVNAAPSLPLSVEGQARRLIAEAVSHSNLGKMYVWWMAWF</sequence>
<evidence type="ECO:0000250" key="1"/>
<evidence type="ECO:0000255" key="2">
    <source>
        <dbReference type="PROSITE-ProRule" id="PRU00269"/>
    </source>
</evidence>
<evidence type="ECO:0000255" key="3">
    <source>
        <dbReference type="PROSITE-ProRule" id="PRU00534"/>
    </source>
</evidence>
<evidence type="ECO:0000255" key="4">
    <source>
        <dbReference type="PROSITE-ProRule" id="PRU00535"/>
    </source>
</evidence>
<evidence type="ECO:0000305" key="5"/>
<proteinExistence type="evidence at transcript level"/>
<feature type="chain" id="PRO_0000225631" description="Serine/threonine-protein kinase ATR">
    <location>
        <begin position="1"/>
        <end position="2710"/>
    </location>
</feature>
<feature type="domain" description="FAT" evidence="3">
    <location>
        <begin position="1647"/>
        <end position="2257"/>
    </location>
</feature>
<feature type="domain" description="PI3K/PI4K catalytic" evidence="2">
    <location>
        <begin position="2368"/>
        <end position="2680"/>
    </location>
</feature>
<feature type="domain" description="FATC" evidence="3 4">
    <location>
        <begin position="2678"/>
        <end position="2710"/>
    </location>
</feature>
<feature type="region of interest" description="G-loop" evidence="2">
    <location>
        <begin position="2374"/>
        <end position="2380"/>
    </location>
</feature>
<feature type="region of interest" description="Catalytic loop" evidence="2">
    <location>
        <begin position="2545"/>
        <end position="2553"/>
    </location>
</feature>
<feature type="region of interest" description="Activation loop" evidence="2">
    <location>
        <begin position="2565"/>
        <end position="2589"/>
    </location>
</feature>
<accession>Q5Z987</accession>
<keyword id="KW-0067">ATP-binding</keyword>
<keyword id="KW-0131">Cell cycle</keyword>
<keyword id="KW-0227">DNA damage</keyword>
<keyword id="KW-0234">DNA repair</keyword>
<keyword id="KW-0418">Kinase</keyword>
<keyword id="KW-0547">Nucleotide-binding</keyword>
<keyword id="KW-0539">Nucleus</keyword>
<keyword id="KW-1185">Reference proteome</keyword>
<keyword id="KW-0723">Serine/threonine-protein kinase</keyword>
<keyword id="KW-0808">Transferase</keyword>
<reference key="1">
    <citation type="journal article" date="2005" name="Nature">
        <title>The map-based sequence of the rice genome.</title>
        <authorList>
            <consortium name="International rice genome sequencing project (IRGSP)"/>
        </authorList>
    </citation>
    <scope>NUCLEOTIDE SEQUENCE [LARGE SCALE GENOMIC DNA]</scope>
    <source>
        <strain>cv. Nipponbare</strain>
    </source>
</reference>
<reference key="2">
    <citation type="journal article" date="2013" name="Rice">
        <title>Improvement of the Oryza sativa Nipponbare reference genome using next generation sequence and optical map data.</title>
        <authorList>
            <person name="Kawahara Y."/>
            <person name="de la Bastide M."/>
            <person name="Hamilton J.P."/>
            <person name="Kanamori H."/>
            <person name="McCombie W.R."/>
            <person name="Ouyang S."/>
            <person name="Schwartz D.C."/>
            <person name="Tanaka T."/>
            <person name="Wu J."/>
            <person name="Zhou S."/>
            <person name="Childs K.L."/>
            <person name="Davidson R.M."/>
            <person name="Lin H."/>
            <person name="Quesada-Ocampo L."/>
            <person name="Vaillancourt B."/>
            <person name="Sakai H."/>
            <person name="Lee S.S."/>
            <person name="Kim J."/>
            <person name="Numa H."/>
            <person name="Itoh T."/>
            <person name="Buell C.R."/>
            <person name="Matsumoto T."/>
        </authorList>
    </citation>
    <scope>GENOME REANNOTATION</scope>
    <source>
        <strain>cv. Nipponbare</strain>
    </source>
</reference>
<reference key="3">
    <citation type="journal article" date="2003" name="Science">
        <title>Collection, mapping, and annotation of over 28,000 cDNA clones from japonica rice.</title>
        <authorList>
            <consortium name="The rice full-length cDNA consortium"/>
        </authorList>
    </citation>
    <scope>NUCLEOTIDE SEQUENCE [LARGE SCALE MRNA]</scope>
    <source>
        <strain>cv. Nipponbare</strain>
    </source>
</reference>
<protein>
    <recommendedName>
        <fullName>Serine/threonine-protein kinase ATR</fullName>
        <ecNumber>2.7.11.1</ecNumber>
    </recommendedName>
</protein>